<proteinExistence type="inferred from homology"/>
<evidence type="ECO:0000255" key="1">
    <source>
        <dbReference type="HAMAP-Rule" id="MF_01014"/>
    </source>
</evidence>
<gene>
    <name evidence="1" type="primary">hisA</name>
    <name type="ordered locus">SAR11_0330</name>
</gene>
<reference key="1">
    <citation type="journal article" date="2005" name="Science">
        <title>Genome streamlining in a cosmopolitan oceanic bacterium.</title>
        <authorList>
            <person name="Giovannoni S.J."/>
            <person name="Tripp H.J."/>
            <person name="Givan S."/>
            <person name="Podar M."/>
            <person name="Vergin K.L."/>
            <person name="Baptista D."/>
            <person name="Bibbs L."/>
            <person name="Eads J."/>
            <person name="Richardson T.H."/>
            <person name="Noordewier M."/>
            <person name="Rappe M.S."/>
            <person name="Short J.M."/>
            <person name="Carrington J.C."/>
            <person name="Mathur E.J."/>
        </authorList>
    </citation>
    <scope>NUCLEOTIDE SEQUENCE [LARGE SCALE GENOMIC DNA]</scope>
    <source>
        <strain>HTCC1062</strain>
    </source>
</reference>
<sequence length="239" mass="26292">MKIFPAIDIKDKKCVRLIKGDFNNKTEYEISPVDQAGKYKDHGFKNLHIVDLDGALTGETVNLDIIKEIVHKFDLKIEVGGGVRSIDSIEKYINAGVEKVILGSAAIKNKNFLKEACQKFPNKIALGLDAKDGYLSVSGWKENSNQLTLDFLKEVNDYGASRLIYTDINRDGTKESPNFEETTNVANVSNCPVIISGGVSSIDDIKKAKGLKNIEGIIVGKAIYDGDIKLEELVKELDA</sequence>
<feature type="chain" id="PRO_0000229066" description="1-(5-phosphoribosyl)-5-[(5-phosphoribosylamino)methylideneamino] imidazole-4-carboxamide isomerase">
    <location>
        <begin position="1"/>
        <end position="239"/>
    </location>
</feature>
<feature type="active site" description="Proton acceptor" evidence="1">
    <location>
        <position position="8"/>
    </location>
</feature>
<feature type="active site" description="Proton donor" evidence="1">
    <location>
        <position position="129"/>
    </location>
</feature>
<accession>Q4FNT6</accession>
<name>HIS4_PELUB</name>
<comment type="catalytic activity">
    <reaction evidence="1">
        <text>1-(5-phospho-beta-D-ribosyl)-5-[(5-phospho-beta-D-ribosylamino)methylideneamino]imidazole-4-carboxamide = 5-[(5-phospho-1-deoxy-D-ribulos-1-ylimino)methylamino]-1-(5-phospho-beta-D-ribosyl)imidazole-4-carboxamide</text>
        <dbReference type="Rhea" id="RHEA:15469"/>
        <dbReference type="ChEBI" id="CHEBI:58435"/>
        <dbReference type="ChEBI" id="CHEBI:58525"/>
        <dbReference type="EC" id="5.3.1.16"/>
    </reaction>
</comment>
<comment type="pathway">
    <text evidence="1">Amino-acid biosynthesis; L-histidine biosynthesis; L-histidine from 5-phospho-alpha-D-ribose 1-diphosphate: step 4/9.</text>
</comment>
<comment type="subcellular location">
    <subcellularLocation>
        <location evidence="1">Cytoplasm</location>
    </subcellularLocation>
</comment>
<comment type="similarity">
    <text evidence="1">Belongs to the HisA/HisF family.</text>
</comment>
<dbReference type="EC" id="5.3.1.16" evidence="1"/>
<dbReference type="EMBL" id="CP000084">
    <property type="protein sequence ID" value="AAZ21153.1"/>
    <property type="molecule type" value="Genomic_DNA"/>
</dbReference>
<dbReference type="RefSeq" id="WP_006997577.1">
    <property type="nucleotide sequence ID" value="NC_007205.1"/>
</dbReference>
<dbReference type="SMR" id="Q4FNT6"/>
<dbReference type="STRING" id="335992.SAR11_0330"/>
<dbReference type="GeneID" id="66294829"/>
<dbReference type="KEGG" id="pub:SAR11_0330"/>
<dbReference type="eggNOG" id="COG0106">
    <property type="taxonomic scope" value="Bacteria"/>
</dbReference>
<dbReference type="HOGENOM" id="CLU_048577_1_1_5"/>
<dbReference type="OrthoDB" id="9807749at2"/>
<dbReference type="UniPathway" id="UPA00031">
    <property type="reaction ID" value="UER00009"/>
</dbReference>
<dbReference type="Proteomes" id="UP000002528">
    <property type="component" value="Chromosome"/>
</dbReference>
<dbReference type="GO" id="GO:0005737">
    <property type="term" value="C:cytoplasm"/>
    <property type="evidence" value="ECO:0007669"/>
    <property type="project" value="UniProtKB-SubCell"/>
</dbReference>
<dbReference type="GO" id="GO:0003949">
    <property type="term" value="F:1-(5-phosphoribosyl)-5-[(5-phosphoribosylamino)methylideneamino]imidazole-4-carboxamide isomerase activity"/>
    <property type="evidence" value="ECO:0007669"/>
    <property type="project" value="UniProtKB-UniRule"/>
</dbReference>
<dbReference type="GO" id="GO:0000105">
    <property type="term" value="P:L-histidine biosynthetic process"/>
    <property type="evidence" value="ECO:0007669"/>
    <property type="project" value="UniProtKB-UniRule"/>
</dbReference>
<dbReference type="GO" id="GO:0000162">
    <property type="term" value="P:L-tryptophan biosynthetic process"/>
    <property type="evidence" value="ECO:0007669"/>
    <property type="project" value="TreeGrafter"/>
</dbReference>
<dbReference type="CDD" id="cd04732">
    <property type="entry name" value="HisA"/>
    <property type="match status" value="1"/>
</dbReference>
<dbReference type="FunFam" id="3.20.20.70:FF:000009">
    <property type="entry name" value="1-(5-phosphoribosyl)-5-[(5-phosphoribosylamino)methylideneamino] imidazole-4-carboxamide isomerase"/>
    <property type="match status" value="1"/>
</dbReference>
<dbReference type="Gene3D" id="3.20.20.70">
    <property type="entry name" value="Aldolase class I"/>
    <property type="match status" value="1"/>
</dbReference>
<dbReference type="HAMAP" id="MF_01014">
    <property type="entry name" value="HisA"/>
    <property type="match status" value="1"/>
</dbReference>
<dbReference type="InterPro" id="IPR013785">
    <property type="entry name" value="Aldolase_TIM"/>
</dbReference>
<dbReference type="InterPro" id="IPR006062">
    <property type="entry name" value="His_biosynth"/>
</dbReference>
<dbReference type="InterPro" id="IPR006063">
    <property type="entry name" value="HisA_bact_arch"/>
</dbReference>
<dbReference type="InterPro" id="IPR044524">
    <property type="entry name" value="Isoase_HisA-like"/>
</dbReference>
<dbReference type="InterPro" id="IPR023016">
    <property type="entry name" value="Isoase_HisA-like_bact"/>
</dbReference>
<dbReference type="InterPro" id="IPR011060">
    <property type="entry name" value="RibuloseP-bd_barrel"/>
</dbReference>
<dbReference type="NCBIfam" id="TIGR00007">
    <property type="entry name" value="1-(5-phosphoribosyl)-5-[(5-phosphoribosylamino)methylideneamino]imidazole-4-carboxamide isomerase"/>
    <property type="match status" value="1"/>
</dbReference>
<dbReference type="PANTHER" id="PTHR43090">
    <property type="entry name" value="1-(5-PHOSPHORIBOSYL)-5-[(5-PHOSPHORIBOSYLAMINO)METHYLIDENEAMINO] IMIDAZOLE-4-CARBOXAMIDE ISOMERASE"/>
    <property type="match status" value="1"/>
</dbReference>
<dbReference type="PANTHER" id="PTHR43090:SF2">
    <property type="entry name" value="1-(5-PHOSPHORIBOSYL)-5-[(5-PHOSPHORIBOSYLAMINO)METHYLIDENEAMINO] IMIDAZOLE-4-CARBOXAMIDE ISOMERASE"/>
    <property type="match status" value="1"/>
</dbReference>
<dbReference type="Pfam" id="PF00977">
    <property type="entry name" value="His_biosynth"/>
    <property type="match status" value="1"/>
</dbReference>
<dbReference type="SUPFAM" id="SSF51366">
    <property type="entry name" value="Ribulose-phoshate binding barrel"/>
    <property type="match status" value="1"/>
</dbReference>
<organism>
    <name type="scientific">Pelagibacter ubique (strain HTCC1062)</name>
    <dbReference type="NCBI Taxonomy" id="335992"/>
    <lineage>
        <taxon>Bacteria</taxon>
        <taxon>Pseudomonadati</taxon>
        <taxon>Pseudomonadota</taxon>
        <taxon>Alphaproteobacteria</taxon>
        <taxon>Candidatus Pelagibacterales</taxon>
        <taxon>Candidatus Pelagibacteraceae</taxon>
        <taxon>Candidatus Pelagibacter</taxon>
    </lineage>
</organism>
<protein>
    <recommendedName>
        <fullName evidence="1">1-(5-phosphoribosyl)-5-[(5-phosphoribosylamino)methylideneamino] imidazole-4-carboxamide isomerase</fullName>
        <ecNumber evidence="1">5.3.1.16</ecNumber>
    </recommendedName>
    <alternativeName>
        <fullName evidence="1">Phosphoribosylformimino-5-aminoimidazole carboxamide ribotide isomerase</fullName>
    </alternativeName>
</protein>
<keyword id="KW-0028">Amino-acid biosynthesis</keyword>
<keyword id="KW-0963">Cytoplasm</keyword>
<keyword id="KW-0368">Histidine biosynthesis</keyword>
<keyword id="KW-0413">Isomerase</keyword>
<keyword id="KW-1185">Reference proteome</keyword>